<keyword id="KW-0067">ATP-binding</keyword>
<keyword id="KW-0143">Chaperone</keyword>
<keyword id="KW-0963">Cytoplasm</keyword>
<keyword id="KW-0517">Myogenesis</keyword>
<keyword id="KW-0547">Nucleotide-binding</keyword>
<keyword id="KW-1185">Reference proteome</keyword>
<keyword id="KW-0346">Stress response</keyword>
<organism>
    <name type="scientific">Danio rerio</name>
    <name type="common">Zebrafish</name>
    <name type="synonym">Brachydanio rerio</name>
    <dbReference type="NCBI Taxonomy" id="7955"/>
    <lineage>
        <taxon>Eukaryota</taxon>
        <taxon>Metazoa</taxon>
        <taxon>Chordata</taxon>
        <taxon>Craniata</taxon>
        <taxon>Vertebrata</taxon>
        <taxon>Euteleostomi</taxon>
        <taxon>Actinopterygii</taxon>
        <taxon>Neopterygii</taxon>
        <taxon>Teleostei</taxon>
        <taxon>Ostariophysi</taxon>
        <taxon>Cypriniformes</taxon>
        <taxon>Danionidae</taxon>
        <taxon>Danioninae</taxon>
        <taxon>Danio</taxon>
    </lineage>
</organism>
<dbReference type="EMBL" id="AF068773">
    <property type="protein sequence ID" value="AAC21567.1"/>
    <property type="molecule type" value="mRNA"/>
</dbReference>
<dbReference type="EMBL" id="CR381646">
    <property type="protein sequence ID" value="CAI21043.1"/>
    <property type="molecule type" value="Genomic_DNA"/>
</dbReference>
<dbReference type="EMBL" id="BC075757">
    <property type="protein sequence ID" value="AAH75757.1"/>
    <property type="molecule type" value="mRNA"/>
</dbReference>
<dbReference type="EMBL" id="L35586">
    <property type="protein sequence ID" value="AAA97518.1"/>
    <property type="molecule type" value="mRNA"/>
</dbReference>
<dbReference type="PIR" id="JC2343">
    <property type="entry name" value="JC2343"/>
</dbReference>
<dbReference type="RefSeq" id="NP_571403.1">
    <property type="nucleotide sequence ID" value="NM_131328.1"/>
</dbReference>
<dbReference type="SMR" id="Q90474"/>
<dbReference type="ELM" id="Q90474"/>
<dbReference type="FunCoup" id="Q90474">
    <property type="interactions" value="1320"/>
</dbReference>
<dbReference type="STRING" id="7955.ENSDARP00000022302"/>
<dbReference type="PaxDb" id="7955-ENSDARP00000022302"/>
<dbReference type="Ensembl" id="ENSDART00000004756">
    <property type="protein sequence ID" value="ENSDARP00000022302"/>
    <property type="gene ID" value="ENSDARG00000010478"/>
</dbReference>
<dbReference type="Ensembl" id="ENSDART00000170138">
    <property type="protein sequence ID" value="ENSDARP00000138112"/>
    <property type="gene ID" value="ENSDARG00000010478"/>
</dbReference>
<dbReference type="GeneID" id="30591"/>
<dbReference type="KEGG" id="dre:30591"/>
<dbReference type="AGR" id="ZFIN:ZDB-GENE-990415-94"/>
<dbReference type="CTD" id="30591"/>
<dbReference type="ZFIN" id="ZDB-GENE-990415-94">
    <property type="gene designation" value="hsp90aa1.1"/>
</dbReference>
<dbReference type="eggNOG" id="KOG0019">
    <property type="taxonomic scope" value="Eukaryota"/>
</dbReference>
<dbReference type="HOGENOM" id="CLU_006684_1_3_1"/>
<dbReference type="InParanoid" id="Q90474"/>
<dbReference type="OMA" id="LNISXIS"/>
<dbReference type="OrthoDB" id="5426351at2759"/>
<dbReference type="PhylomeDB" id="Q90474"/>
<dbReference type="TreeFam" id="TF300686"/>
<dbReference type="PRO" id="PR:Q90474"/>
<dbReference type="Proteomes" id="UP000000437">
    <property type="component" value="Chromosome 20"/>
</dbReference>
<dbReference type="Bgee" id="ENSDARG00000010478">
    <property type="expression patterns" value="Expressed in somite and 34 other cell types or tissues"/>
</dbReference>
<dbReference type="GO" id="GO:0031672">
    <property type="term" value="C:A band"/>
    <property type="evidence" value="ECO:0007669"/>
    <property type="project" value="UniProtKB-SubCell"/>
</dbReference>
<dbReference type="GO" id="GO:0005829">
    <property type="term" value="C:cytosol"/>
    <property type="evidence" value="ECO:0000318"/>
    <property type="project" value="GO_Central"/>
</dbReference>
<dbReference type="GO" id="GO:0042470">
    <property type="term" value="C:melanosome"/>
    <property type="evidence" value="ECO:0007669"/>
    <property type="project" value="UniProtKB-SubCell"/>
</dbReference>
<dbReference type="GO" id="GO:0043209">
    <property type="term" value="C:myelin sheath"/>
    <property type="evidence" value="ECO:0000318"/>
    <property type="project" value="GO_Central"/>
</dbReference>
<dbReference type="GO" id="GO:0043025">
    <property type="term" value="C:neuronal cell body"/>
    <property type="evidence" value="ECO:0000318"/>
    <property type="project" value="GO_Central"/>
</dbReference>
<dbReference type="GO" id="GO:0005634">
    <property type="term" value="C:nucleus"/>
    <property type="evidence" value="ECO:0000318"/>
    <property type="project" value="GO_Central"/>
</dbReference>
<dbReference type="GO" id="GO:0048471">
    <property type="term" value="C:perinuclear region of cytoplasm"/>
    <property type="evidence" value="ECO:0000318"/>
    <property type="project" value="GO_Central"/>
</dbReference>
<dbReference type="GO" id="GO:0005886">
    <property type="term" value="C:plasma membrane"/>
    <property type="evidence" value="ECO:0000318"/>
    <property type="project" value="GO_Central"/>
</dbReference>
<dbReference type="GO" id="GO:0032991">
    <property type="term" value="C:protein-containing complex"/>
    <property type="evidence" value="ECO:0000318"/>
    <property type="project" value="GO_Central"/>
</dbReference>
<dbReference type="GO" id="GO:0030018">
    <property type="term" value="C:Z disc"/>
    <property type="evidence" value="ECO:0000314"/>
    <property type="project" value="ZFIN"/>
</dbReference>
<dbReference type="GO" id="GO:0005524">
    <property type="term" value="F:ATP binding"/>
    <property type="evidence" value="ECO:0000250"/>
    <property type="project" value="UniProtKB"/>
</dbReference>
<dbReference type="GO" id="GO:0016887">
    <property type="term" value="F:ATP hydrolysis activity"/>
    <property type="evidence" value="ECO:0000318"/>
    <property type="project" value="GO_Central"/>
</dbReference>
<dbReference type="GO" id="GO:0140662">
    <property type="term" value="F:ATP-dependent protein folding chaperone"/>
    <property type="evidence" value="ECO:0007669"/>
    <property type="project" value="InterPro"/>
</dbReference>
<dbReference type="GO" id="GO:0030235">
    <property type="term" value="F:nitric-oxide synthase regulator activity"/>
    <property type="evidence" value="ECO:0000250"/>
    <property type="project" value="UniProtKB"/>
</dbReference>
<dbReference type="GO" id="GO:0051082">
    <property type="term" value="F:unfolded protein binding"/>
    <property type="evidence" value="ECO:0000318"/>
    <property type="project" value="GO_Central"/>
</dbReference>
<dbReference type="GO" id="GO:0034605">
    <property type="term" value="P:cellular response to heat"/>
    <property type="evidence" value="ECO:0000318"/>
    <property type="project" value="GO_Central"/>
</dbReference>
<dbReference type="GO" id="GO:0050900">
    <property type="term" value="P:leukocyte migration"/>
    <property type="evidence" value="ECO:0000315"/>
    <property type="project" value="ZFIN"/>
</dbReference>
<dbReference type="GO" id="GO:0007517">
    <property type="term" value="P:muscle organ development"/>
    <property type="evidence" value="ECO:0007669"/>
    <property type="project" value="UniProtKB-KW"/>
</dbReference>
<dbReference type="GO" id="GO:0030239">
    <property type="term" value="P:myofibril assembly"/>
    <property type="evidence" value="ECO:0000315"/>
    <property type="project" value="ZFIN"/>
</dbReference>
<dbReference type="GO" id="GO:0045429">
    <property type="term" value="P:positive regulation of nitric oxide biosynthetic process"/>
    <property type="evidence" value="ECO:0000250"/>
    <property type="project" value="UniProtKB"/>
</dbReference>
<dbReference type="GO" id="GO:0006457">
    <property type="term" value="P:protein folding"/>
    <property type="evidence" value="ECO:0000318"/>
    <property type="project" value="GO_Central"/>
</dbReference>
<dbReference type="GO" id="GO:0050821">
    <property type="term" value="P:protein stabilization"/>
    <property type="evidence" value="ECO:0000318"/>
    <property type="project" value="GO_Central"/>
</dbReference>
<dbReference type="GO" id="GO:0010038">
    <property type="term" value="P:response to metal ion"/>
    <property type="evidence" value="ECO:0000314"/>
    <property type="project" value="ZFIN"/>
</dbReference>
<dbReference type="GO" id="GO:0048769">
    <property type="term" value="P:sarcomerogenesis"/>
    <property type="evidence" value="ECO:0000315"/>
    <property type="project" value="ZFIN"/>
</dbReference>
<dbReference type="GO" id="GO:0030241">
    <property type="term" value="P:skeletal muscle myosin thick filament assembly"/>
    <property type="evidence" value="ECO:0000315"/>
    <property type="project" value="ZFIN"/>
</dbReference>
<dbReference type="GO" id="GO:0030240">
    <property type="term" value="P:skeletal muscle thin filament assembly"/>
    <property type="evidence" value="ECO:0000315"/>
    <property type="project" value="ZFIN"/>
</dbReference>
<dbReference type="GO" id="GO:0014866">
    <property type="term" value="P:skeletal myofibril assembly"/>
    <property type="evidence" value="ECO:0000315"/>
    <property type="project" value="ZFIN"/>
</dbReference>
<dbReference type="GO" id="GO:0071688">
    <property type="term" value="P:striated muscle myosin thick filament assembly"/>
    <property type="evidence" value="ECO:0000315"/>
    <property type="project" value="ZFIN"/>
</dbReference>
<dbReference type="CDD" id="cd16927">
    <property type="entry name" value="HATPase_Hsp90-like"/>
    <property type="match status" value="1"/>
</dbReference>
<dbReference type="FunFam" id="1.20.120.790:FF:000001">
    <property type="entry name" value="Heat shock protein 90 alpha"/>
    <property type="match status" value="1"/>
</dbReference>
<dbReference type="FunFam" id="3.30.230.80:FF:000001">
    <property type="entry name" value="Heat shock protein 90 alpha"/>
    <property type="match status" value="1"/>
</dbReference>
<dbReference type="FunFam" id="3.40.50.11260:FF:000001">
    <property type="entry name" value="Heat shock protein 90 alpha"/>
    <property type="match status" value="1"/>
</dbReference>
<dbReference type="FunFam" id="3.30.565.10:FF:000204">
    <property type="entry name" value="Heat shock protein HSP 90-beta"/>
    <property type="match status" value="1"/>
</dbReference>
<dbReference type="Gene3D" id="3.30.230.80">
    <property type="match status" value="1"/>
</dbReference>
<dbReference type="Gene3D" id="3.40.50.11260">
    <property type="match status" value="1"/>
</dbReference>
<dbReference type="Gene3D" id="1.20.120.790">
    <property type="entry name" value="Heat shock protein 90, C-terminal domain"/>
    <property type="match status" value="1"/>
</dbReference>
<dbReference type="Gene3D" id="3.30.565.10">
    <property type="entry name" value="Histidine kinase-like ATPase, C-terminal domain"/>
    <property type="match status" value="1"/>
</dbReference>
<dbReference type="HAMAP" id="MF_00505">
    <property type="entry name" value="HSP90"/>
    <property type="match status" value="1"/>
</dbReference>
<dbReference type="InterPro" id="IPR036890">
    <property type="entry name" value="HATPase_C_sf"/>
</dbReference>
<dbReference type="InterPro" id="IPR019805">
    <property type="entry name" value="Heat_shock_protein_90_CS"/>
</dbReference>
<dbReference type="InterPro" id="IPR037196">
    <property type="entry name" value="HSP90_C"/>
</dbReference>
<dbReference type="InterPro" id="IPR001404">
    <property type="entry name" value="Hsp90_fam"/>
</dbReference>
<dbReference type="InterPro" id="IPR020575">
    <property type="entry name" value="Hsp90_N"/>
</dbReference>
<dbReference type="InterPro" id="IPR020568">
    <property type="entry name" value="Ribosomal_Su5_D2-typ_SF"/>
</dbReference>
<dbReference type="NCBIfam" id="NF003555">
    <property type="entry name" value="PRK05218.1"/>
    <property type="match status" value="1"/>
</dbReference>
<dbReference type="PANTHER" id="PTHR11528">
    <property type="entry name" value="HEAT SHOCK PROTEIN 90 FAMILY MEMBER"/>
    <property type="match status" value="1"/>
</dbReference>
<dbReference type="Pfam" id="PF13589">
    <property type="entry name" value="HATPase_c_3"/>
    <property type="match status" value="1"/>
</dbReference>
<dbReference type="Pfam" id="PF00183">
    <property type="entry name" value="HSP90"/>
    <property type="match status" value="1"/>
</dbReference>
<dbReference type="PIRSF" id="PIRSF002583">
    <property type="entry name" value="Hsp90"/>
    <property type="match status" value="1"/>
</dbReference>
<dbReference type="PRINTS" id="PR00775">
    <property type="entry name" value="HEATSHOCK90"/>
</dbReference>
<dbReference type="SMART" id="SM00387">
    <property type="entry name" value="HATPase_c"/>
    <property type="match status" value="1"/>
</dbReference>
<dbReference type="SUPFAM" id="SSF55874">
    <property type="entry name" value="ATPase domain of HSP90 chaperone/DNA topoisomerase II/histidine kinase"/>
    <property type="match status" value="1"/>
</dbReference>
<dbReference type="SUPFAM" id="SSF110942">
    <property type="entry name" value="HSP90 C-terminal domain"/>
    <property type="match status" value="1"/>
</dbReference>
<dbReference type="SUPFAM" id="SSF54211">
    <property type="entry name" value="Ribosomal protein S5 domain 2-like"/>
    <property type="match status" value="1"/>
</dbReference>
<dbReference type="PROSITE" id="PS00298">
    <property type="entry name" value="HSP90"/>
    <property type="match status" value="1"/>
</dbReference>
<name>H90A1_DANRE</name>
<evidence type="ECO:0000250" key="1"/>
<evidence type="ECO:0000250" key="2">
    <source>
        <dbReference type="UniProtKB" id="P07900"/>
    </source>
</evidence>
<evidence type="ECO:0000256" key="3">
    <source>
        <dbReference type="SAM" id="MobiDB-lite"/>
    </source>
</evidence>
<evidence type="ECO:0000269" key="4">
    <source>
    </source>
</evidence>
<evidence type="ECO:0000269" key="5">
    <source>
    </source>
</evidence>
<evidence type="ECO:0000269" key="6">
    <source>
    </source>
</evidence>
<evidence type="ECO:0000269" key="7">
    <source>
    </source>
</evidence>
<evidence type="ECO:0000269" key="8">
    <source>
    </source>
</evidence>
<evidence type="ECO:0000269" key="9">
    <source>
    </source>
</evidence>
<evidence type="ECO:0000269" key="10">
    <source>
    </source>
</evidence>
<evidence type="ECO:0000269" key="11">
    <source>
    </source>
</evidence>
<evidence type="ECO:0000305" key="12"/>
<feature type="chain" id="PRO_0000062924" description="Heat shock protein HSP 90-alpha 1">
    <location>
        <begin position="1"/>
        <end position="725"/>
    </location>
</feature>
<feature type="region of interest" description="Disordered" evidence="3">
    <location>
        <begin position="228"/>
        <end position="273"/>
    </location>
</feature>
<feature type="region of interest" description="Required for homodimerization" evidence="2">
    <location>
        <begin position="675"/>
        <end position="725"/>
    </location>
</feature>
<feature type="region of interest" description="Disordered" evidence="3">
    <location>
        <begin position="697"/>
        <end position="725"/>
    </location>
</feature>
<feature type="short sequence motif" description="TPR repeat-binding" evidence="2">
    <location>
        <begin position="716"/>
        <end position="725"/>
    </location>
</feature>
<feature type="compositionally biased region" description="Acidic residues" evidence="3">
    <location>
        <begin position="228"/>
        <end position="242"/>
    </location>
</feature>
<feature type="compositionally biased region" description="Basic and acidic residues" evidence="3">
    <location>
        <begin position="243"/>
        <end position="253"/>
    </location>
</feature>
<feature type="compositionally biased region" description="Acidic residues" evidence="3">
    <location>
        <begin position="705"/>
        <end position="716"/>
    </location>
</feature>
<feature type="binding site" evidence="1">
    <location>
        <position position="48"/>
    </location>
    <ligand>
        <name>ATP</name>
        <dbReference type="ChEBI" id="CHEBI:30616"/>
    </ligand>
</feature>
<feature type="binding site" evidence="1">
    <location>
        <position position="90"/>
    </location>
    <ligand>
        <name>ATP</name>
        <dbReference type="ChEBI" id="CHEBI:30616"/>
    </ligand>
</feature>
<feature type="binding site" evidence="1">
    <location>
        <position position="109"/>
    </location>
    <ligand>
        <name>ATP</name>
        <dbReference type="ChEBI" id="CHEBI:30616"/>
    </ligand>
</feature>
<feature type="binding site" evidence="1">
    <location>
        <position position="135"/>
    </location>
    <ligand>
        <name>ATP</name>
        <dbReference type="ChEBI" id="CHEBI:30616"/>
    </ligand>
</feature>
<feature type="binding site" evidence="1">
    <location>
        <position position="393"/>
    </location>
    <ligand>
        <name>ATP</name>
        <dbReference type="ChEBI" id="CHEBI:30616"/>
    </ligand>
</feature>
<feature type="mutagenesis site" description="In slou45; absence of thick filaments leading to loss of filamentous organization of myofibrils." evidence="8">
    <original>G</original>
    <variation>D</variation>
    <location>
        <position position="94"/>
    </location>
</feature>
<feature type="mutagenesis site" description="Reduced binding to unc45b." evidence="7">
    <location>
        <begin position="721"/>
        <end position="725"/>
    </location>
</feature>
<feature type="sequence conflict" description="In Ref. 1; AAC21567." evidence="12" ref="1">
    <original>KSAQPVME</original>
    <variation>AHEQQMMED</variation>
    <location>
        <begin position="4"/>
        <end position="11"/>
    </location>
</feature>
<feature type="sequence conflict" description="In Ref. 5; AAH75757." evidence="12" ref="5">
    <original>L</original>
    <variation>F</variation>
    <location>
        <position position="217"/>
    </location>
</feature>
<feature type="sequence conflict" description="In Ref. 5; AAH75757." evidence="12" ref="5">
    <original>E</original>
    <variation>D</variation>
    <location>
        <position position="300"/>
    </location>
</feature>
<feature type="sequence conflict" description="In Ref. 5; AAH75757." evidence="12" ref="5">
    <original>Q</original>
    <variation>R</variation>
    <location>
        <position position="447"/>
    </location>
</feature>
<feature type="sequence conflict" description="In Ref. 1; AAC21567." evidence="12" ref="1">
    <original>D</original>
    <variation>E</variation>
    <location>
        <position position="646"/>
    </location>
</feature>
<accession>Q90474</accession>
<accession>Q5RG13</accession>
<accession>Q6DI33</accession>
<reference key="1">
    <citation type="journal article" date="1999" name="Dev. Biol.">
        <title>Disruption of zebrafish somite development by pharmacologic inhibition of Hsp90.</title>
        <authorList>
            <person name="Lele Z."/>
            <person name="Hartson S.D."/>
            <person name="Martin C.C."/>
            <person name="Whitesell L."/>
            <person name="Matts R.L."/>
            <person name="Krone P.H."/>
        </authorList>
    </citation>
    <scope>NUCLEOTIDE SEQUENCE [MRNA]</scope>
    <scope>FUNCTION</scope>
    <source>
        <tissue>Embryo</tissue>
    </source>
</reference>
<reference key="2">
    <citation type="journal article" date="2007" name="Dev. Biol.">
        <title>The UCS factor Steif/Unc-45b interacts with the heat shock protein Hsp90a during myofibrillogenesis.</title>
        <authorList>
            <person name="Etard C."/>
            <person name="Behra M."/>
            <person name="Fischer N."/>
            <person name="Hutcheson D."/>
            <person name="Geisler R."/>
            <person name="Strahle U."/>
        </authorList>
    </citation>
    <scope>NUCLEOTIDE SEQUENCE [MRNA]</scope>
    <scope>FUNCTION</scope>
    <scope>INTERACTION WITH UNC45B</scope>
</reference>
<reference key="3">
    <citation type="journal article" date="2008" name="J. Cell Biol.">
        <title>Shuttling of the chaperones Unc45b and Hsp90a between the A band and the Z line of the myofibril.</title>
        <authorList>
            <person name="Etard C."/>
            <person name="Roostalu U."/>
            <person name="Strahle U."/>
        </authorList>
    </citation>
    <scope>NUCLEOTIDE SEQUENCE [MRNA]</scope>
    <scope>INTERACTION WITH MYOSIN</scope>
    <scope>SUBCELLULAR LOCATION</scope>
    <source>
        <tissue>Embryo</tissue>
    </source>
</reference>
<reference key="4">
    <citation type="journal article" date="2013" name="Nature">
        <title>The zebrafish reference genome sequence and its relationship to the human genome.</title>
        <authorList>
            <person name="Howe K."/>
            <person name="Clark M.D."/>
            <person name="Torroja C.F."/>
            <person name="Torrance J."/>
            <person name="Berthelot C."/>
            <person name="Muffato M."/>
            <person name="Collins J.E."/>
            <person name="Humphray S."/>
            <person name="McLaren K."/>
            <person name="Matthews L."/>
            <person name="McLaren S."/>
            <person name="Sealy I."/>
            <person name="Caccamo M."/>
            <person name="Churcher C."/>
            <person name="Scott C."/>
            <person name="Barrett J.C."/>
            <person name="Koch R."/>
            <person name="Rauch G.J."/>
            <person name="White S."/>
            <person name="Chow W."/>
            <person name="Kilian B."/>
            <person name="Quintais L.T."/>
            <person name="Guerra-Assuncao J.A."/>
            <person name="Zhou Y."/>
            <person name="Gu Y."/>
            <person name="Yen J."/>
            <person name="Vogel J.H."/>
            <person name="Eyre T."/>
            <person name="Redmond S."/>
            <person name="Banerjee R."/>
            <person name="Chi J."/>
            <person name="Fu B."/>
            <person name="Langley E."/>
            <person name="Maguire S.F."/>
            <person name="Laird G.K."/>
            <person name="Lloyd D."/>
            <person name="Kenyon E."/>
            <person name="Donaldson S."/>
            <person name="Sehra H."/>
            <person name="Almeida-King J."/>
            <person name="Loveland J."/>
            <person name="Trevanion S."/>
            <person name="Jones M."/>
            <person name="Quail M."/>
            <person name="Willey D."/>
            <person name="Hunt A."/>
            <person name="Burton J."/>
            <person name="Sims S."/>
            <person name="McLay K."/>
            <person name="Plumb B."/>
            <person name="Davis J."/>
            <person name="Clee C."/>
            <person name="Oliver K."/>
            <person name="Clark R."/>
            <person name="Riddle C."/>
            <person name="Elliot D."/>
            <person name="Threadgold G."/>
            <person name="Harden G."/>
            <person name="Ware D."/>
            <person name="Begum S."/>
            <person name="Mortimore B."/>
            <person name="Kerry G."/>
            <person name="Heath P."/>
            <person name="Phillimore B."/>
            <person name="Tracey A."/>
            <person name="Corby N."/>
            <person name="Dunn M."/>
            <person name="Johnson C."/>
            <person name="Wood J."/>
            <person name="Clark S."/>
            <person name="Pelan S."/>
            <person name="Griffiths G."/>
            <person name="Smith M."/>
            <person name="Glithero R."/>
            <person name="Howden P."/>
            <person name="Barker N."/>
            <person name="Lloyd C."/>
            <person name="Stevens C."/>
            <person name="Harley J."/>
            <person name="Holt K."/>
            <person name="Panagiotidis G."/>
            <person name="Lovell J."/>
            <person name="Beasley H."/>
            <person name="Henderson C."/>
            <person name="Gordon D."/>
            <person name="Auger K."/>
            <person name="Wright D."/>
            <person name="Collins J."/>
            <person name="Raisen C."/>
            <person name="Dyer L."/>
            <person name="Leung K."/>
            <person name="Robertson L."/>
            <person name="Ambridge K."/>
            <person name="Leongamornlert D."/>
            <person name="McGuire S."/>
            <person name="Gilderthorp R."/>
            <person name="Griffiths C."/>
            <person name="Manthravadi D."/>
            <person name="Nichol S."/>
            <person name="Barker G."/>
            <person name="Whitehead S."/>
            <person name="Kay M."/>
            <person name="Brown J."/>
            <person name="Murnane C."/>
            <person name="Gray E."/>
            <person name="Humphries M."/>
            <person name="Sycamore N."/>
            <person name="Barker D."/>
            <person name="Saunders D."/>
            <person name="Wallis J."/>
            <person name="Babbage A."/>
            <person name="Hammond S."/>
            <person name="Mashreghi-Mohammadi M."/>
            <person name="Barr L."/>
            <person name="Martin S."/>
            <person name="Wray P."/>
            <person name="Ellington A."/>
            <person name="Matthews N."/>
            <person name="Ellwood M."/>
            <person name="Woodmansey R."/>
            <person name="Clark G."/>
            <person name="Cooper J."/>
            <person name="Tromans A."/>
            <person name="Grafham D."/>
            <person name="Skuce C."/>
            <person name="Pandian R."/>
            <person name="Andrews R."/>
            <person name="Harrison E."/>
            <person name="Kimberley A."/>
            <person name="Garnett J."/>
            <person name="Fosker N."/>
            <person name="Hall R."/>
            <person name="Garner P."/>
            <person name="Kelly D."/>
            <person name="Bird C."/>
            <person name="Palmer S."/>
            <person name="Gehring I."/>
            <person name="Berger A."/>
            <person name="Dooley C.M."/>
            <person name="Ersan-Urun Z."/>
            <person name="Eser C."/>
            <person name="Geiger H."/>
            <person name="Geisler M."/>
            <person name="Karotki L."/>
            <person name="Kirn A."/>
            <person name="Konantz J."/>
            <person name="Konantz M."/>
            <person name="Oberlander M."/>
            <person name="Rudolph-Geiger S."/>
            <person name="Teucke M."/>
            <person name="Lanz C."/>
            <person name="Raddatz G."/>
            <person name="Osoegawa K."/>
            <person name="Zhu B."/>
            <person name="Rapp A."/>
            <person name="Widaa S."/>
            <person name="Langford C."/>
            <person name="Yang F."/>
            <person name="Schuster S.C."/>
            <person name="Carter N.P."/>
            <person name="Harrow J."/>
            <person name="Ning Z."/>
            <person name="Herrero J."/>
            <person name="Searle S.M."/>
            <person name="Enright A."/>
            <person name="Geisler R."/>
            <person name="Plasterk R.H."/>
            <person name="Lee C."/>
            <person name="Westerfield M."/>
            <person name="de Jong P.J."/>
            <person name="Zon L.I."/>
            <person name="Postlethwait J.H."/>
            <person name="Nusslein-Volhard C."/>
            <person name="Hubbard T.J."/>
            <person name="Roest Crollius H."/>
            <person name="Rogers J."/>
            <person name="Stemple D.L."/>
        </authorList>
    </citation>
    <scope>NUCLEOTIDE SEQUENCE [LARGE SCALE GENOMIC DNA]</scope>
    <source>
        <strain>Tuebingen</strain>
    </source>
</reference>
<reference key="5">
    <citation type="submission" date="2004-07" db="EMBL/GenBank/DDBJ databases">
        <authorList>
            <consortium name="NIH - Zebrafish Gene Collection (ZGC) project"/>
        </authorList>
    </citation>
    <scope>NUCLEOTIDE SEQUENCE [LARGE SCALE MRNA]</scope>
    <source>
        <tissue>Embryo</tissue>
    </source>
</reference>
<reference key="6">
    <citation type="journal article" date="1994" name="Biochem. Biophys. Res. Commun.">
        <title>HSP 90 alpha and HSP 90 beta genes are present in the zebrafish and are differentially regulated in developing embryos.</title>
        <authorList>
            <person name="Krone P.H."/>
            <person name="Sass J.B."/>
        </authorList>
    </citation>
    <scope>NUCLEOTIDE SEQUENCE [MRNA] OF 35-135</scope>
    <scope>INDUCTION</scope>
    <scope>DEVELOPMENTAL STAGE</scope>
    <source>
        <tissue>Embryo</tissue>
    </source>
</reference>
<reference key="7">
    <citation type="journal article" date="1996" name="Mech. Dev.">
        <title>Specific localization of zebrafish hsp90 alpha mRNA to myoD-expressing cells suggests a role for hsp90 alpha during normal muscle development.</title>
        <authorList>
            <person name="Sass J.B."/>
            <person name="Weinberg E.S."/>
            <person name="Krone P.H."/>
        </authorList>
    </citation>
    <scope>TISSUE SPECIFICITY</scope>
    <scope>INDUCTION</scope>
</reference>
<reference key="8">
    <citation type="journal article" date="1999" name="Int. J. Dev. Biol.">
        <title>Restricted expression of the zebrafish hsp90alpha gene in slow and fast muscle fiber lineages.</title>
        <authorList>
            <person name="Sass J.B."/>
            <person name="Martin C.C."/>
            <person name="Krone P.H."/>
        </authorList>
    </citation>
    <scope>TISSUE SPECIFICITY</scope>
    <scope>DEVELOPMENTAL STAGE</scope>
</reference>
<reference key="9">
    <citation type="journal article" date="2008" name="Development">
        <title>The ATPase-dependent chaperoning activity of Hsp90a regulates thick filament formation and integration during skeletal muscle myofibrillogenesis.</title>
        <authorList>
            <person name="Hawkins T.A."/>
            <person name="Haramis A.P."/>
            <person name="Etard C."/>
            <person name="Prodromou C."/>
            <person name="Vaughan C.K."/>
            <person name="Ashworth R."/>
            <person name="Ray S."/>
            <person name="Behra M."/>
            <person name="Holder N."/>
            <person name="Talbot W.S."/>
            <person name="Pearl L.H."/>
            <person name="Strahle U."/>
            <person name="Wilson S.W."/>
        </authorList>
    </citation>
    <scope>FUNCTION</scope>
    <scope>MUTAGENESIS OF GLY-94</scope>
</reference>
<reference key="10">
    <citation type="journal article" date="2008" name="Proc. Natl. Acad. Sci. U.S.A.">
        <title>Heat-shock protein 90alpha1 is required for organized myofibril assembly in skeletal muscles of zebrafish embryos.</title>
        <authorList>
            <person name="Du S.J."/>
            <person name="Li H."/>
            <person name="Bian Y."/>
            <person name="Zhong Y."/>
        </authorList>
    </citation>
    <scope>FUNCTION</scope>
    <scope>TISSUE SPECIFICITY</scope>
    <scope>MUTAGENESIS OF 721-MET--ASP-725</scope>
</reference>
<sequence length="725" mass="83319">MPEKSAQPVMEEEVETFAFQAEIAQLMSLIINTFYSNKEIFLRELISNSSDALDKIRYESLTDPSKLDSCKDLKIELIPDQKERTLTIIDTGIGMTKADLINNLGTIAKSGTKAFMEALQAGADISMIGQFGVGFYSAYLVAEKVTVITKHNDDEQYIWESAAGGSFTVKPDFGESIGRGTKVILHLKEDQSEYVEEKRIKEVVKKHSQFIGYPITLYIEKQREKEVDLEEGEKQEEEEVAAGEDKDKPKIEDLGADEDEDSKDGKNKRKKKVKEKYIDAQELNKTKPIWTRNPDDITNEEYGEFYKSLSNDWEDHLAVKHFSVEGQLEFRALLFVPRRAAFDLFENKKKRNNIKLYVRRVFIMDNCEELIPEYLNFIKGVVDSEDLPLNISREMLQQSKILKVIRKNLVKKCLDLFTELAEDKDNYKKYYEQFSKNIKLGIHEDSQNRKKLSDLLRYYTSASGDEMVSLKDYVSRMKDTQKHIYYITGETKDQVANSAFVERLRKAGLEVIYMIEPIDEYCVQQLKEYDGKNLVSVTKEGLELPEDEEEKKKQDELKAKYENLCKIMKDILDKKIEKVTVSNRLVSSPCCIVTSTYGWTANMERIMKSQALRDNSTMGYMTAKKHLEINPAHPIVETLREKAEADKNDKAVKDLVILLFETALLSSGFTLDDPQTHANRIYRMIKLGLGIDDDDSVVEEISQPAEEDMPVLEGDDDTSRMEEVD</sequence>
<comment type="function">
    <text evidence="2 4 6 7 8">Molecular chaperone that promotes the maturation, structural maintenance and proper regulation of specific target proteins involved for instance in cell cycle control and signal transduction. Undergoes a functional cycle that is linked to its ATPase activity which is essential for its chaperone activity. This cycle probably induces conformational changes in the client proteins, thereby causing their activation. Interacts dynamically with various co-chaperones that modulate its substrate recognition, ATPase cycle and chaperone function. Engages with a range of client protein classes via its interaction with various co-chaperone proteins or complexes, that act as adapters, simultaneously able to interact with the specific client and the central chaperone itself. Recruitment of ATP and co-chaperone followed by client protein forms a functional chaperone. After the completion of the chaperoning process, properly folded client protein and co-chaperone leave HSP90 in an ADP-bound partially open conformation and finally, ADP is released from HSP90 which acquires an open conformation for the next cycle (By similarity). Plays a key role in slow and fast muscle development in the embryo. Plays a role in myosin expression and assembly (PubMed:10364427, PubMed:17586488, PubMed:18182494, PubMed:18256191).</text>
</comment>
<comment type="activity regulation">
    <text evidence="2">In the resting state, through the dimerization of its C-terminal domain, HSP90 forms a homodimer which is defined as the open conformation. Upon ATP-binding, the N-terminal domain undergoes significant conformational changes and comes in contact to form an active closed conformation. After HSP90 finishes its chaperoning tasks of assisting the proper folding, stabilization and activation of client proteins under the active state, ATP molecule is hydrolyzed to ADP which then dissociates from HSP90 and directs the protein back to the resting state.</text>
</comment>
<comment type="subunit">
    <text evidence="2 6 9">Homodimer (By similarity). Interacts with unc45b and myosin.</text>
</comment>
<comment type="subcellular location">
    <subcellularLocation>
        <location evidence="2">Melanosome</location>
    </subcellularLocation>
    <subcellularLocation>
        <location evidence="9">Cytoplasm</location>
        <location evidence="9">Myofibril</location>
        <location evidence="9">Sarcomere</location>
        <location evidence="9">Z line</location>
    </subcellularLocation>
    <subcellularLocation>
        <location evidence="9">Cytoplasm</location>
        <location evidence="9">Myofibril</location>
        <location evidence="9">Sarcomere</location>
        <location evidence="9">A band</location>
    </subcellularLocation>
    <subcellularLocation>
        <location evidence="9">Cytoplasm</location>
        <location evidence="9">Perinuclear region</location>
    </subcellularLocation>
    <text>Expressed at the Z line and in the perinuclear region of myofibrils. Shuttles between the Z line and A band in response to stress conditions and fibril damage.</text>
</comment>
<comment type="tissue specificity">
    <text evidence="5 7 11">Strongly expressed in the early embryos within the somitic slow muscle progenitors, the adaxial cells that lie on either side of the notochord but not the notochord. Also expressed during the early differentiation of fast fibers. Detected in developing cardiac muscles and pectoral fin primordia. Not detected in mature muscle fibers.</text>
</comment>
<comment type="developmental stage">
    <text evidence="5 10">Barely detectable during embryogenesis at control temperatures. Distributed throughout the cytoplasm of early developing myocytes at 24 hours post fertilization (hpf).</text>
</comment>
<comment type="induction">
    <text evidence="10 11">Up-regulated by heat shock in embryos and larvae with highest levels of expression in 3 day old larvae.</text>
</comment>
<comment type="domain">
    <text evidence="2">The TPR repeat-binding motif mediates interaction with TPR repeat-containing proteins.</text>
</comment>
<comment type="similarity">
    <text evidence="12">Belongs to the heat shock protein 90 family.</text>
</comment>
<proteinExistence type="evidence at protein level"/>
<gene>
    <name type="primary">hsp90a.1</name>
    <name type="synonym">hsp90</name>
    <name type="synonym">hsp90a</name>
    <name type="synonym">hsp90aa1</name>
    <name type="ORF">zgc:86652</name>
</gene>
<protein>
    <recommendedName>
        <fullName>Heat shock protein HSP 90-alpha 1</fullName>
    </recommendedName>
</protein>